<gene>
    <name type="primary">RPL37A</name>
</gene>
<feature type="chain" id="PRO_0000139817" description="Large ribosomal subunit protein eL43">
    <location>
        <begin position="1"/>
        <end position="92"/>
    </location>
</feature>
<feature type="zinc finger region" description="C4-type">
    <location>
        <begin position="39"/>
        <end position="60"/>
    </location>
</feature>
<feature type="binding site" evidence="1">
    <location>
        <position position="39"/>
    </location>
    <ligand>
        <name>Zn(2+)</name>
        <dbReference type="ChEBI" id="CHEBI:29105"/>
    </ligand>
</feature>
<feature type="binding site" evidence="1">
    <location>
        <position position="42"/>
    </location>
    <ligand>
        <name>Zn(2+)</name>
        <dbReference type="ChEBI" id="CHEBI:29105"/>
    </ligand>
</feature>
<feature type="binding site" evidence="1">
    <location>
        <position position="57"/>
    </location>
    <ligand>
        <name>Zn(2+)</name>
        <dbReference type="ChEBI" id="CHEBI:29105"/>
    </ligand>
</feature>
<feature type="binding site" evidence="1">
    <location>
        <position position="60"/>
    </location>
    <ligand>
        <name>Zn(2+)</name>
        <dbReference type="ChEBI" id="CHEBI:29105"/>
    </ligand>
</feature>
<proteinExistence type="evidence at protein level"/>
<keyword id="KW-0002">3D-structure</keyword>
<keyword id="KW-0963">Cytoplasm</keyword>
<keyword id="KW-0479">Metal-binding</keyword>
<keyword id="KW-1267">Proteomics identification</keyword>
<keyword id="KW-1185">Reference proteome</keyword>
<keyword id="KW-0687">Ribonucleoprotein</keyword>
<keyword id="KW-0689">Ribosomal protein</keyword>
<keyword id="KW-0862">Zinc</keyword>
<keyword id="KW-0863">Zinc-finger</keyword>
<name>RL37A_HUMAN</name>
<sequence>MAKRTKKVGIVGKYGTRYGASLRKMVKKIEISQHAKYTCSFCGKTKMKRRAVGIWHCGSCMKTVAGGAWTYNTTSAVTVKSAIRRLKELKDQ</sequence>
<organism>
    <name type="scientific">Homo sapiens</name>
    <name type="common">Human</name>
    <dbReference type="NCBI Taxonomy" id="9606"/>
    <lineage>
        <taxon>Eukaryota</taxon>
        <taxon>Metazoa</taxon>
        <taxon>Chordata</taxon>
        <taxon>Craniata</taxon>
        <taxon>Vertebrata</taxon>
        <taxon>Euteleostomi</taxon>
        <taxon>Mammalia</taxon>
        <taxon>Eutheria</taxon>
        <taxon>Euarchontoglires</taxon>
        <taxon>Primates</taxon>
        <taxon>Haplorrhini</taxon>
        <taxon>Catarrhini</taxon>
        <taxon>Hominidae</taxon>
        <taxon>Homo</taxon>
    </lineage>
</organism>
<accession>P61513</accession>
<accession>P12751</accession>
<accession>Q6FGF5</accession>
<reference key="1">
    <citation type="journal article" date="1992" name="Nucleic Acids Res.">
        <title>Primary sequence of the human ribosomal protein L37a.</title>
        <authorList>
            <person name="Hoof T."/>
            <person name="Fislage R."/>
            <person name="Tuemmler B."/>
        </authorList>
    </citation>
    <scope>NUCLEOTIDE SEQUENCE [MRNA]</scope>
    <source>
        <tissue>Nasal polyp</tissue>
    </source>
</reference>
<reference key="2">
    <citation type="journal article" date="1993" name="Nucleic Acids Res.">
        <title>Human ribosomal protein S20 cDNA sequence.</title>
        <authorList>
            <person name="Chu W."/>
            <person name="Presky D.H."/>
            <person name="Swerlick R.A."/>
            <person name="Burns D.K."/>
        </authorList>
    </citation>
    <scope>NUCLEOTIDE SEQUENCE [MRNA]</scope>
</reference>
<reference key="3">
    <citation type="journal article" date="1993" name="Gene">
        <title>Human ribosomal protein L37a: cloning of the cDNA and analysis of differential gene expression in tissues and cell lines.</title>
        <authorList>
            <person name="Saha D.P."/>
            <person name="Tirumalai P.S."/>
            <person name="Scala L.A."/>
            <person name="Howells R.D."/>
        </authorList>
    </citation>
    <scope>NUCLEOTIDE SEQUENCE [MRNA]</scope>
</reference>
<reference key="4">
    <citation type="journal article" date="2004" name="Nat. Genet.">
        <title>Complete sequencing and characterization of 21,243 full-length human cDNAs.</title>
        <authorList>
            <person name="Ota T."/>
            <person name="Suzuki Y."/>
            <person name="Nishikawa T."/>
            <person name="Otsuki T."/>
            <person name="Sugiyama T."/>
            <person name="Irie R."/>
            <person name="Wakamatsu A."/>
            <person name="Hayashi K."/>
            <person name="Sato H."/>
            <person name="Nagai K."/>
            <person name="Kimura K."/>
            <person name="Makita H."/>
            <person name="Sekine M."/>
            <person name="Obayashi M."/>
            <person name="Nishi T."/>
            <person name="Shibahara T."/>
            <person name="Tanaka T."/>
            <person name="Ishii S."/>
            <person name="Yamamoto J."/>
            <person name="Saito K."/>
            <person name="Kawai Y."/>
            <person name="Isono Y."/>
            <person name="Nakamura Y."/>
            <person name="Nagahari K."/>
            <person name="Murakami K."/>
            <person name="Yasuda T."/>
            <person name="Iwayanagi T."/>
            <person name="Wagatsuma M."/>
            <person name="Shiratori A."/>
            <person name="Sudo H."/>
            <person name="Hosoiri T."/>
            <person name="Kaku Y."/>
            <person name="Kodaira H."/>
            <person name="Kondo H."/>
            <person name="Sugawara M."/>
            <person name="Takahashi M."/>
            <person name="Kanda K."/>
            <person name="Yokoi T."/>
            <person name="Furuya T."/>
            <person name="Kikkawa E."/>
            <person name="Omura Y."/>
            <person name="Abe K."/>
            <person name="Kamihara K."/>
            <person name="Katsuta N."/>
            <person name="Sato K."/>
            <person name="Tanikawa M."/>
            <person name="Yamazaki M."/>
            <person name="Ninomiya K."/>
            <person name="Ishibashi T."/>
            <person name="Yamashita H."/>
            <person name="Murakawa K."/>
            <person name="Fujimori K."/>
            <person name="Tanai H."/>
            <person name="Kimata M."/>
            <person name="Watanabe M."/>
            <person name="Hiraoka S."/>
            <person name="Chiba Y."/>
            <person name="Ishida S."/>
            <person name="Ono Y."/>
            <person name="Takiguchi S."/>
            <person name="Watanabe S."/>
            <person name="Yosida M."/>
            <person name="Hotuta T."/>
            <person name="Kusano J."/>
            <person name="Kanehori K."/>
            <person name="Takahashi-Fujii A."/>
            <person name="Hara H."/>
            <person name="Tanase T.-O."/>
            <person name="Nomura Y."/>
            <person name="Togiya S."/>
            <person name="Komai F."/>
            <person name="Hara R."/>
            <person name="Takeuchi K."/>
            <person name="Arita M."/>
            <person name="Imose N."/>
            <person name="Musashino K."/>
            <person name="Yuuki H."/>
            <person name="Oshima A."/>
            <person name="Sasaki N."/>
            <person name="Aotsuka S."/>
            <person name="Yoshikawa Y."/>
            <person name="Matsunawa H."/>
            <person name="Ichihara T."/>
            <person name="Shiohata N."/>
            <person name="Sano S."/>
            <person name="Moriya S."/>
            <person name="Momiyama H."/>
            <person name="Satoh N."/>
            <person name="Takami S."/>
            <person name="Terashima Y."/>
            <person name="Suzuki O."/>
            <person name="Nakagawa S."/>
            <person name="Senoh A."/>
            <person name="Mizoguchi H."/>
            <person name="Goto Y."/>
            <person name="Shimizu F."/>
            <person name="Wakebe H."/>
            <person name="Hishigaki H."/>
            <person name="Watanabe T."/>
            <person name="Sugiyama A."/>
            <person name="Takemoto M."/>
            <person name="Kawakami B."/>
            <person name="Yamazaki M."/>
            <person name="Watanabe K."/>
            <person name="Kumagai A."/>
            <person name="Itakura S."/>
            <person name="Fukuzumi Y."/>
            <person name="Fujimori Y."/>
            <person name="Komiyama M."/>
            <person name="Tashiro H."/>
            <person name="Tanigami A."/>
            <person name="Fujiwara T."/>
            <person name="Ono T."/>
            <person name="Yamada K."/>
            <person name="Fujii Y."/>
            <person name="Ozaki K."/>
            <person name="Hirao M."/>
            <person name="Ohmori Y."/>
            <person name="Kawabata A."/>
            <person name="Hikiji T."/>
            <person name="Kobatake N."/>
            <person name="Inagaki H."/>
            <person name="Ikema Y."/>
            <person name="Okamoto S."/>
            <person name="Okitani R."/>
            <person name="Kawakami T."/>
            <person name="Noguchi S."/>
            <person name="Itoh T."/>
            <person name="Shigeta K."/>
            <person name="Senba T."/>
            <person name="Matsumura K."/>
            <person name="Nakajima Y."/>
            <person name="Mizuno T."/>
            <person name="Morinaga M."/>
            <person name="Sasaki M."/>
            <person name="Togashi T."/>
            <person name="Oyama M."/>
            <person name="Hata H."/>
            <person name="Watanabe M."/>
            <person name="Komatsu T."/>
            <person name="Mizushima-Sugano J."/>
            <person name="Satoh T."/>
            <person name="Shirai Y."/>
            <person name="Takahashi Y."/>
            <person name="Nakagawa K."/>
            <person name="Okumura K."/>
            <person name="Nagase T."/>
            <person name="Nomura N."/>
            <person name="Kikuchi H."/>
            <person name="Masuho Y."/>
            <person name="Yamashita R."/>
            <person name="Nakai K."/>
            <person name="Yada T."/>
            <person name="Nakamura Y."/>
            <person name="Ohara O."/>
            <person name="Isogai T."/>
            <person name="Sugano S."/>
        </authorList>
    </citation>
    <scope>NUCLEOTIDE SEQUENCE [LARGE SCALE MRNA]</scope>
    <source>
        <tissue>Cerebellum</tissue>
    </source>
</reference>
<reference key="5">
    <citation type="submission" date="2004-06" db="EMBL/GenBank/DDBJ databases">
        <title>Cloning of human full open reading frames in Gateway(TM) system entry vector (pDONR201).</title>
        <authorList>
            <person name="Ebert L."/>
            <person name="Schick M."/>
            <person name="Neubert P."/>
            <person name="Schatten R."/>
            <person name="Henze S."/>
            <person name="Korn B."/>
        </authorList>
    </citation>
    <scope>NUCLEOTIDE SEQUENCE [LARGE SCALE MRNA]</scope>
</reference>
<reference key="6">
    <citation type="journal article" date="2005" name="Nature">
        <title>Generation and annotation of the DNA sequences of human chromosomes 2 and 4.</title>
        <authorList>
            <person name="Hillier L.W."/>
            <person name="Graves T.A."/>
            <person name="Fulton R.S."/>
            <person name="Fulton L.A."/>
            <person name="Pepin K.H."/>
            <person name="Minx P."/>
            <person name="Wagner-McPherson C."/>
            <person name="Layman D."/>
            <person name="Wylie K."/>
            <person name="Sekhon M."/>
            <person name="Becker M.C."/>
            <person name="Fewell G.A."/>
            <person name="Delehaunty K.D."/>
            <person name="Miner T.L."/>
            <person name="Nash W.E."/>
            <person name="Kremitzki C."/>
            <person name="Oddy L."/>
            <person name="Du H."/>
            <person name="Sun H."/>
            <person name="Bradshaw-Cordum H."/>
            <person name="Ali J."/>
            <person name="Carter J."/>
            <person name="Cordes M."/>
            <person name="Harris A."/>
            <person name="Isak A."/>
            <person name="van Brunt A."/>
            <person name="Nguyen C."/>
            <person name="Du F."/>
            <person name="Courtney L."/>
            <person name="Kalicki J."/>
            <person name="Ozersky P."/>
            <person name="Abbott S."/>
            <person name="Armstrong J."/>
            <person name="Belter E.A."/>
            <person name="Caruso L."/>
            <person name="Cedroni M."/>
            <person name="Cotton M."/>
            <person name="Davidson T."/>
            <person name="Desai A."/>
            <person name="Elliott G."/>
            <person name="Erb T."/>
            <person name="Fronick C."/>
            <person name="Gaige T."/>
            <person name="Haakenson W."/>
            <person name="Haglund K."/>
            <person name="Holmes A."/>
            <person name="Harkins R."/>
            <person name="Kim K."/>
            <person name="Kruchowski S.S."/>
            <person name="Strong C.M."/>
            <person name="Grewal N."/>
            <person name="Goyea E."/>
            <person name="Hou S."/>
            <person name="Levy A."/>
            <person name="Martinka S."/>
            <person name="Mead K."/>
            <person name="McLellan M.D."/>
            <person name="Meyer R."/>
            <person name="Randall-Maher J."/>
            <person name="Tomlinson C."/>
            <person name="Dauphin-Kohlberg S."/>
            <person name="Kozlowicz-Reilly A."/>
            <person name="Shah N."/>
            <person name="Swearengen-Shahid S."/>
            <person name="Snider J."/>
            <person name="Strong J.T."/>
            <person name="Thompson J."/>
            <person name="Yoakum M."/>
            <person name="Leonard S."/>
            <person name="Pearman C."/>
            <person name="Trani L."/>
            <person name="Radionenko M."/>
            <person name="Waligorski J.E."/>
            <person name="Wang C."/>
            <person name="Rock S.M."/>
            <person name="Tin-Wollam A.-M."/>
            <person name="Maupin R."/>
            <person name="Latreille P."/>
            <person name="Wendl M.C."/>
            <person name="Yang S.-P."/>
            <person name="Pohl C."/>
            <person name="Wallis J.W."/>
            <person name="Spieth J."/>
            <person name="Bieri T.A."/>
            <person name="Berkowicz N."/>
            <person name="Nelson J.O."/>
            <person name="Osborne J."/>
            <person name="Ding L."/>
            <person name="Meyer R."/>
            <person name="Sabo A."/>
            <person name="Shotland Y."/>
            <person name="Sinha P."/>
            <person name="Wohldmann P.E."/>
            <person name="Cook L.L."/>
            <person name="Hickenbotham M.T."/>
            <person name="Eldred J."/>
            <person name="Williams D."/>
            <person name="Jones T.A."/>
            <person name="She X."/>
            <person name="Ciccarelli F.D."/>
            <person name="Izaurralde E."/>
            <person name="Taylor J."/>
            <person name="Schmutz J."/>
            <person name="Myers R.M."/>
            <person name="Cox D.R."/>
            <person name="Huang X."/>
            <person name="McPherson J.D."/>
            <person name="Mardis E.R."/>
            <person name="Clifton S.W."/>
            <person name="Warren W.C."/>
            <person name="Chinwalla A.T."/>
            <person name="Eddy S.R."/>
            <person name="Marra M.A."/>
            <person name="Ovcharenko I."/>
            <person name="Furey T.S."/>
            <person name="Miller W."/>
            <person name="Eichler E.E."/>
            <person name="Bork P."/>
            <person name="Suyama M."/>
            <person name="Torrents D."/>
            <person name="Waterston R.H."/>
            <person name="Wilson R.K."/>
        </authorList>
    </citation>
    <scope>NUCLEOTIDE SEQUENCE [LARGE SCALE GENOMIC DNA]</scope>
</reference>
<reference key="7">
    <citation type="submission" date="2005-07" db="EMBL/GenBank/DDBJ databases">
        <authorList>
            <person name="Mural R.J."/>
            <person name="Istrail S."/>
            <person name="Sutton G.G."/>
            <person name="Florea L."/>
            <person name="Halpern A.L."/>
            <person name="Mobarry C.M."/>
            <person name="Lippert R."/>
            <person name="Walenz B."/>
            <person name="Shatkay H."/>
            <person name="Dew I."/>
            <person name="Miller J.R."/>
            <person name="Flanigan M.J."/>
            <person name="Edwards N.J."/>
            <person name="Bolanos R."/>
            <person name="Fasulo D."/>
            <person name="Halldorsson B.V."/>
            <person name="Hannenhalli S."/>
            <person name="Turner R."/>
            <person name="Yooseph S."/>
            <person name="Lu F."/>
            <person name="Nusskern D.R."/>
            <person name="Shue B.C."/>
            <person name="Zheng X.H."/>
            <person name="Zhong F."/>
            <person name="Delcher A.L."/>
            <person name="Huson D.H."/>
            <person name="Kravitz S.A."/>
            <person name="Mouchard L."/>
            <person name="Reinert K."/>
            <person name="Remington K.A."/>
            <person name="Clark A.G."/>
            <person name="Waterman M.S."/>
            <person name="Eichler E.E."/>
            <person name="Adams M.D."/>
            <person name="Hunkapiller M.W."/>
            <person name="Myers E.W."/>
            <person name="Venter J.C."/>
        </authorList>
    </citation>
    <scope>NUCLEOTIDE SEQUENCE [LARGE SCALE GENOMIC DNA]</scope>
</reference>
<reference key="8">
    <citation type="journal article" date="2004" name="Genome Res.">
        <title>The status, quality, and expansion of the NIH full-length cDNA project: the Mammalian Gene Collection (MGC).</title>
        <authorList>
            <consortium name="The MGC Project Team"/>
        </authorList>
    </citation>
    <scope>NUCLEOTIDE SEQUENCE [LARGE SCALE MRNA]</scope>
    <source>
        <tissue>B-cell</tissue>
        <tissue>Brain</tissue>
        <tissue>Skin</tissue>
        <tissue>Testis</tissue>
    </source>
</reference>
<reference key="9">
    <citation type="journal article" date="2011" name="BMC Syst. Biol.">
        <title>Initial characterization of the human central proteome.</title>
        <authorList>
            <person name="Burkard T.R."/>
            <person name="Planyavsky M."/>
            <person name="Kaupe I."/>
            <person name="Breitwieser F.P."/>
            <person name="Buerckstuemmer T."/>
            <person name="Bennett K.L."/>
            <person name="Superti-Furga G."/>
            <person name="Colinge J."/>
        </authorList>
    </citation>
    <scope>IDENTIFICATION BY MASS SPECTROMETRY [LARGE SCALE ANALYSIS]</scope>
</reference>
<reference key="10">
    <citation type="journal article" date="2014" name="Curr. Opin. Struct. Biol.">
        <title>A new system for naming ribosomal proteins.</title>
        <authorList>
            <person name="Ban N."/>
            <person name="Beckmann R."/>
            <person name="Cate J.H.D."/>
            <person name="Dinman J.D."/>
            <person name="Dragon F."/>
            <person name="Ellis S.R."/>
            <person name="Lafontaine D.L.J."/>
            <person name="Lindahl L."/>
            <person name="Liljas A."/>
            <person name="Lipton J.M."/>
            <person name="McAlear M.A."/>
            <person name="Moore P.B."/>
            <person name="Noller H.F."/>
            <person name="Ortega J."/>
            <person name="Panse V.G."/>
            <person name="Ramakrishnan V."/>
            <person name="Spahn C.M.T."/>
            <person name="Steitz T.A."/>
            <person name="Tchorzewski M."/>
            <person name="Tollervey D."/>
            <person name="Warren A.J."/>
            <person name="Williamson J.R."/>
            <person name="Wilson D."/>
            <person name="Yonath A."/>
            <person name="Yusupov M."/>
        </authorList>
    </citation>
    <scope>NOMENCLATURE</scope>
</reference>
<reference key="11">
    <citation type="journal article" date="2015" name="Proteomics">
        <title>N-terminome analysis of the human mitochondrial proteome.</title>
        <authorList>
            <person name="Vaca Jacome A.S."/>
            <person name="Rabilloud T."/>
            <person name="Schaeffer-Reiss C."/>
            <person name="Rompais M."/>
            <person name="Ayoub D."/>
            <person name="Lane L."/>
            <person name="Bairoch A."/>
            <person name="Van Dorsselaer A."/>
            <person name="Carapito C."/>
        </authorList>
    </citation>
    <scope>IDENTIFICATION BY MASS SPECTROMETRY [LARGE SCALE ANALYSIS]</scope>
</reference>
<reference key="12">
    <citation type="journal article" date="2013" name="Nature">
        <title>Structures of the human and Drosophila 80S ribosome.</title>
        <authorList>
            <person name="Anger A.M."/>
            <person name="Armache J.P."/>
            <person name="Berninghausen O."/>
            <person name="Habeck M."/>
            <person name="Subklewe M."/>
            <person name="Wilson D.N."/>
            <person name="Beckmann R."/>
        </authorList>
    </citation>
    <scope>STRUCTURE BY ELECTRON MICROSCOPY (5.0 ANGSTROMS)</scope>
    <scope>FUNCTION</scope>
    <scope>SUBUNIT</scope>
    <scope>SUBCELLULAR LOCATION</scope>
</reference>
<reference evidence="6 7 8 9" key="13">
    <citation type="journal article" date="2020" name="Nat. Commun.">
        <title>Structural snapshots of human pre-60S ribosomal particles before and after nuclear export.</title>
        <authorList>
            <person name="Liang X."/>
            <person name="Zuo M.Q."/>
            <person name="Zhang Y."/>
            <person name="Li N."/>
            <person name="Ma C."/>
            <person name="Dong M.Q."/>
            <person name="Gao N."/>
        </authorList>
    </citation>
    <scope>STRUCTURE BY ELECTRON MICROSCOPY (3.09 ANGSTROMS)</scope>
    <scope>FUNCTION</scope>
    <scope>SUBUNIT</scope>
</reference>
<protein>
    <recommendedName>
        <fullName evidence="4">Large ribosomal subunit protein eL43</fullName>
    </recommendedName>
    <alternativeName>
        <fullName>60S ribosomal protein L37a</fullName>
    </alternativeName>
</protein>
<evidence type="ECO:0000250" key="1">
    <source>
        <dbReference type="UniProtKB" id="P49166"/>
    </source>
</evidence>
<evidence type="ECO:0000269" key="2">
    <source>
    </source>
</evidence>
<evidence type="ECO:0000269" key="3">
    <source>
    </source>
</evidence>
<evidence type="ECO:0000303" key="4">
    <source>
    </source>
</evidence>
<evidence type="ECO:0000305" key="5"/>
<evidence type="ECO:0007744" key="6">
    <source>
        <dbReference type="PDB" id="6LQM"/>
    </source>
</evidence>
<evidence type="ECO:0007744" key="7">
    <source>
        <dbReference type="PDB" id="6LSR"/>
    </source>
</evidence>
<evidence type="ECO:0007744" key="8">
    <source>
        <dbReference type="PDB" id="6LSS"/>
    </source>
</evidence>
<evidence type="ECO:0007744" key="9">
    <source>
        <dbReference type="PDB" id="6LU8"/>
    </source>
</evidence>
<comment type="function">
    <text evidence="2 3">Component of the large ribosomal subunit. The ribosome is a large ribonucleoprotein complex responsible for the synthesis of proteins in the cell.</text>
</comment>
<comment type="subunit">
    <text evidence="2 3">Component of the large ribosomal subunit.</text>
</comment>
<comment type="interaction">
    <interactant intactId="EBI-356793">
        <id>P61513</id>
    </interactant>
    <interactant intactId="EBI-1045155">
        <id>P43360</id>
        <label>MAGEA6</label>
    </interactant>
    <organismsDiffer>false</organismsDiffer>
    <experiments>6</experiments>
</comment>
<comment type="interaction">
    <interactant intactId="EBI-356793">
        <id>P61513</id>
    </interactant>
    <interactant intactId="EBI-716404">
        <id>P16284</id>
        <label>PECAM1</label>
    </interactant>
    <organismsDiffer>false</organismsDiffer>
    <experiments>3</experiments>
</comment>
<comment type="interaction">
    <interactant intactId="EBI-356793">
        <id>P61513</id>
    </interactant>
    <interactant intactId="EBI-476586">
        <id>P17612</id>
        <label>PRKACA</label>
    </interactant>
    <organismsDiffer>false</organismsDiffer>
    <experiments>3</experiments>
</comment>
<comment type="interaction">
    <interactant intactId="EBI-356793">
        <id>P61513</id>
    </interactant>
    <interactant intactId="EBI-350723">
        <id>P50454</id>
        <label>SERPINH1</label>
    </interactant>
    <organismsDiffer>false</organismsDiffer>
    <experiments>3</experiments>
</comment>
<comment type="interaction">
    <interactant intactId="EBI-356793">
        <id>P61513</id>
    </interactant>
    <interactant intactId="EBI-296151">
        <id>P37173</id>
        <label>TGFBR2</label>
    </interactant>
    <organismsDiffer>false</organismsDiffer>
    <experiments>3</experiments>
</comment>
<comment type="subcellular location">
    <subcellularLocation>
        <location evidence="2">Cytoplasm</location>
    </subcellularLocation>
</comment>
<comment type="similarity">
    <text evidence="5">Belongs to the eukaryotic ribosomal protein eL43 family.</text>
</comment>
<dbReference type="EMBL" id="L06499">
    <property type="protein sequence ID" value="AAA60280.1"/>
    <property type="molecule type" value="mRNA"/>
</dbReference>
<dbReference type="EMBL" id="X66699">
    <property type="protein sequence ID" value="CAA47244.1"/>
    <property type="molecule type" value="mRNA"/>
</dbReference>
<dbReference type="EMBL" id="L22154">
    <property type="status" value="NOT_ANNOTATED_CDS"/>
    <property type="molecule type" value="mRNA"/>
</dbReference>
<dbReference type="EMBL" id="AK289472">
    <property type="protein sequence ID" value="BAF82161.1"/>
    <property type="molecule type" value="mRNA"/>
</dbReference>
<dbReference type="EMBL" id="CR542152">
    <property type="protein sequence ID" value="CAG46949.1"/>
    <property type="molecule type" value="mRNA"/>
</dbReference>
<dbReference type="EMBL" id="AC073321">
    <property type="protein sequence ID" value="AAY15078.1"/>
    <property type="molecule type" value="Genomic_DNA"/>
</dbReference>
<dbReference type="EMBL" id="CH471063">
    <property type="protein sequence ID" value="EAW70569.1"/>
    <property type="molecule type" value="Genomic_DNA"/>
</dbReference>
<dbReference type="EMBL" id="BC000555">
    <property type="protein sequence ID" value="AAH00555.2"/>
    <property type="molecule type" value="mRNA"/>
</dbReference>
<dbReference type="EMBL" id="BC014262">
    <property type="protein sequence ID" value="AAH14262.1"/>
    <property type="molecule type" value="mRNA"/>
</dbReference>
<dbReference type="EMBL" id="BC016748">
    <property type="protein sequence ID" value="AAH16748.1"/>
    <property type="molecule type" value="mRNA"/>
</dbReference>
<dbReference type="EMBL" id="BC067789">
    <property type="protein sequence ID" value="AAH67789.1"/>
    <property type="molecule type" value="mRNA"/>
</dbReference>
<dbReference type="EMBL" id="BC082239">
    <property type="protein sequence ID" value="AAH82239.1"/>
    <property type="molecule type" value="mRNA"/>
</dbReference>
<dbReference type="CCDS" id="CCDS2404.1"/>
<dbReference type="PIR" id="JN0875">
    <property type="entry name" value="JN0875"/>
</dbReference>
<dbReference type="RefSeq" id="NP_000989.1">
    <property type="nucleotide sequence ID" value="NM_000998.5"/>
</dbReference>
<dbReference type="PDB" id="4UG0">
    <property type="method" value="EM"/>
    <property type="chains" value="Lp=1-92"/>
</dbReference>
<dbReference type="PDB" id="4V6X">
    <property type="method" value="EM"/>
    <property type="resolution" value="5.00 A"/>
    <property type="chains" value="Cp=1-92"/>
</dbReference>
<dbReference type="PDB" id="5AJ0">
    <property type="method" value="EM"/>
    <property type="resolution" value="3.50 A"/>
    <property type="chains" value="Ap=1-92"/>
</dbReference>
<dbReference type="PDB" id="5LKS">
    <property type="method" value="EM"/>
    <property type="resolution" value="3.60 A"/>
    <property type="chains" value="Lp=1-92"/>
</dbReference>
<dbReference type="PDB" id="5T2C">
    <property type="method" value="EM"/>
    <property type="resolution" value="3.60 A"/>
    <property type="chains" value="j=1-92"/>
</dbReference>
<dbReference type="PDB" id="6IP5">
    <property type="method" value="EM"/>
    <property type="resolution" value="3.90 A"/>
    <property type="chains" value="2j=1-92"/>
</dbReference>
<dbReference type="PDB" id="6IP6">
    <property type="method" value="EM"/>
    <property type="resolution" value="4.50 A"/>
    <property type="chains" value="2j=1-92"/>
</dbReference>
<dbReference type="PDB" id="6IP8">
    <property type="method" value="EM"/>
    <property type="resolution" value="3.90 A"/>
    <property type="chains" value="2j=1-92"/>
</dbReference>
<dbReference type="PDB" id="6LQM">
    <property type="method" value="EM"/>
    <property type="resolution" value="3.09 A"/>
    <property type="chains" value="X=1-92"/>
</dbReference>
<dbReference type="PDB" id="6LSR">
    <property type="method" value="EM"/>
    <property type="resolution" value="3.13 A"/>
    <property type="chains" value="X=1-92"/>
</dbReference>
<dbReference type="PDB" id="6LSS">
    <property type="method" value="EM"/>
    <property type="resolution" value="3.23 A"/>
    <property type="chains" value="X=1-92"/>
</dbReference>
<dbReference type="PDB" id="6LU8">
    <property type="method" value="EM"/>
    <property type="resolution" value="3.13 A"/>
    <property type="chains" value="X=1-92"/>
</dbReference>
<dbReference type="PDB" id="6OLE">
    <property type="method" value="EM"/>
    <property type="resolution" value="3.10 A"/>
    <property type="chains" value="q=2-92"/>
</dbReference>
<dbReference type="PDB" id="6OLF">
    <property type="method" value="EM"/>
    <property type="resolution" value="3.90 A"/>
    <property type="chains" value="q=2-92"/>
</dbReference>
<dbReference type="PDB" id="6OLG">
    <property type="method" value="EM"/>
    <property type="resolution" value="3.40 A"/>
    <property type="chains" value="Ap=2-92"/>
</dbReference>
<dbReference type="PDB" id="6OLI">
    <property type="method" value="EM"/>
    <property type="resolution" value="3.50 A"/>
    <property type="chains" value="q=2-92"/>
</dbReference>
<dbReference type="PDB" id="6OLZ">
    <property type="method" value="EM"/>
    <property type="resolution" value="3.90 A"/>
    <property type="chains" value="Ap=2-92"/>
</dbReference>
<dbReference type="PDB" id="6OM0">
    <property type="method" value="EM"/>
    <property type="resolution" value="3.10 A"/>
    <property type="chains" value="q=2-92"/>
</dbReference>
<dbReference type="PDB" id="6OM7">
    <property type="method" value="EM"/>
    <property type="resolution" value="3.70 A"/>
    <property type="chains" value="q=2-92"/>
</dbReference>
<dbReference type="PDB" id="6QZP">
    <property type="method" value="EM"/>
    <property type="resolution" value="2.90 A"/>
    <property type="chains" value="Lp=2-92"/>
</dbReference>
<dbReference type="PDB" id="6W6L">
    <property type="method" value="EM"/>
    <property type="resolution" value="3.84 A"/>
    <property type="chains" value="q=1-92"/>
</dbReference>
<dbReference type="PDB" id="6XA1">
    <property type="method" value="EM"/>
    <property type="resolution" value="2.80 A"/>
    <property type="chains" value="Lp=2-92"/>
</dbReference>
<dbReference type="PDB" id="6Y0G">
    <property type="method" value="EM"/>
    <property type="resolution" value="3.20 A"/>
    <property type="chains" value="Lp=1-92"/>
</dbReference>
<dbReference type="PDB" id="6Y2L">
    <property type="method" value="EM"/>
    <property type="resolution" value="3.00 A"/>
    <property type="chains" value="Lp=1-92"/>
</dbReference>
<dbReference type="PDB" id="6Y57">
    <property type="method" value="EM"/>
    <property type="resolution" value="3.50 A"/>
    <property type="chains" value="Lp=1-92"/>
</dbReference>
<dbReference type="PDB" id="6Y6X">
    <property type="method" value="EM"/>
    <property type="resolution" value="2.80 A"/>
    <property type="chains" value="Lp=2-92"/>
</dbReference>
<dbReference type="PDB" id="6Z6L">
    <property type="method" value="EM"/>
    <property type="resolution" value="3.00 A"/>
    <property type="chains" value="Lp=1-92"/>
</dbReference>
<dbReference type="PDB" id="6Z6M">
    <property type="method" value="EM"/>
    <property type="resolution" value="3.10 A"/>
    <property type="chains" value="Lp=1-92"/>
</dbReference>
<dbReference type="PDB" id="6Z6N">
    <property type="method" value="EM"/>
    <property type="resolution" value="2.90 A"/>
    <property type="chains" value="Lp=1-92"/>
</dbReference>
<dbReference type="PDB" id="6ZM7">
    <property type="method" value="EM"/>
    <property type="resolution" value="2.70 A"/>
    <property type="chains" value="Lp=1-92"/>
</dbReference>
<dbReference type="PDB" id="6ZME">
    <property type="method" value="EM"/>
    <property type="resolution" value="3.00 A"/>
    <property type="chains" value="Lp=1-92"/>
</dbReference>
<dbReference type="PDB" id="6ZMI">
    <property type="method" value="EM"/>
    <property type="resolution" value="2.60 A"/>
    <property type="chains" value="Lp=1-92"/>
</dbReference>
<dbReference type="PDB" id="6ZMO">
    <property type="method" value="EM"/>
    <property type="resolution" value="3.10 A"/>
    <property type="chains" value="Lp=1-92"/>
</dbReference>
<dbReference type="PDB" id="7BHP">
    <property type="method" value="EM"/>
    <property type="resolution" value="3.30 A"/>
    <property type="chains" value="Lp=1-92"/>
</dbReference>
<dbReference type="PDB" id="7F5S">
    <property type="method" value="EM"/>
    <property type="resolution" value="2.72 A"/>
    <property type="chains" value="Lp=1-92"/>
</dbReference>
<dbReference type="PDB" id="7OW7">
    <property type="method" value="EM"/>
    <property type="resolution" value="2.20 A"/>
    <property type="chains" value="j=1-92"/>
</dbReference>
<dbReference type="PDB" id="7XNX">
    <property type="method" value="EM"/>
    <property type="resolution" value="2.70 A"/>
    <property type="chains" value="Lp=1-92"/>
</dbReference>
<dbReference type="PDB" id="7XNY">
    <property type="method" value="EM"/>
    <property type="resolution" value="2.50 A"/>
    <property type="chains" value="Lp=1-92"/>
</dbReference>
<dbReference type="PDB" id="8A3D">
    <property type="method" value="EM"/>
    <property type="resolution" value="1.67 A"/>
    <property type="chains" value="j=1-92"/>
</dbReference>
<dbReference type="PDB" id="8FKZ">
    <property type="method" value="EM"/>
    <property type="resolution" value="3.04 A"/>
    <property type="chains" value="LX=1-92"/>
</dbReference>
<dbReference type="PDB" id="8FL2">
    <property type="method" value="EM"/>
    <property type="resolution" value="2.67 A"/>
    <property type="chains" value="LX=1-92"/>
</dbReference>
<dbReference type="PDB" id="8FL3">
    <property type="method" value="EM"/>
    <property type="resolution" value="2.53 A"/>
    <property type="chains" value="LX=1-92"/>
</dbReference>
<dbReference type="PDB" id="8FL4">
    <property type="method" value="EM"/>
    <property type="resolution" value="2.89 A"/>
    <property type="chains" value="LX=1-92"/>
</dbReference>
<dbReference type="PDB" id="8FL6">
    <property type="method" value="EM"/>
    <property type="resolution" value="2.62 A"/>
    <property type="chains" value="LX=1-92"/>
</dbReference>
<dbReference type="PDB" id="8FL7">
    <property type="method" value="EM"/>
    <property type="resolution" value="2.55 A"/>
    <property type="chains" value="LX=1-92"/>
</dbReference>
<dbReference type="PDB" id="8FL9">
    <property type="method" value="EM"/>
    <property type="resolution" value="2.75 A"/>
    <property type="chains" value="LX=1-92"/>
</dbReference>
<dbReference type="PDB" id="8FLA">
    <property type="method" value="EM"/>
    <property type="resolution" value="2.63 A"/>
    <property type="chains" value="LX=1-92"/>
</dbReference>
<dbReference type="PDB" id="8FLB">
    <property type="method" value="EM"/>
    <property type="resolution" value="2.55 A"/>
    <property type="chains" value="LX=1-92"/>
</dbReference>
<dbReference type="PDB" id="8FLC">
    <property type="method" value="EM"/>
    <property type="resolution" value="2.76 A"/>
    <property type="chains" value="LX=1-92"/>
</dbReference>
<dbReference type="PDB" id="8FLD">
    <property type="method" value="EM"/>
    <property type="resolution" value="2.58 A"/>
    <property type="chains" value="LX=1-92"/>
</dbReference>
<dbReference type="PDB" id="8FLE">
    <property type="method" value="EM"/>
    <property type="resolution" value="2.48 A"/>
    <property type="chains" value="LX=1-92"/>
</dbReference>
<dbReference type="PDB" id="8FLF">
    <property type="method" value="EM"/>
    <property type="resolution" value="2.65 A"/>
    <property type="chains" value="LX=1-92"/>
</dbReference>
<dbReference type="PDB" id="8G5Y">
    <property type="method" value="EM"/>
    <property type="resolution" value="2.29 A"/>
    <property type="chains" value="Lp=1-92"/>
</dbReference>
<dbReference type="PDB" id="8G5Z">
    <property type="method" value="EM"/>
    <property type="resolution" value="2.64 A"/>
    <property type="chains" value="Lp=2-92"/>
</dbReference>
<dbReference type="PDB" id="8G60">
    <property type="method" value="EM"/>
    <property type="resolution" value="2.54 A"/>
    <property type="chains" value="Lp=1-92"/>
</dbReference>
<dbReference type="PDB" id="8G61">
    <property type="method" value="EM"/>
    <property type="resolution" value="2.94 A"/>
    <property type="chains" value="Lp=1-92"/>
</dbReference>
<dbReference type="PDB" id="8G6J">
    <property type="method" value="EM"/>
    <property type="resolution" value="2.80 A"/>
    <property type="chains" value="Lp=1-92"/>
</dbReference>
<dbReference type="PDB" id="8GLP">
    <property type="method" value="EM"/>
    <property type="resolution" value="1.67 A"/>
    <property type="chains" value="Lp=1-92"/>
</dbReference>
<dbReference type="PDB" id="8IDT">
    <property type="method" value="EM"/>
    <property type="resolution" value="2.80 A"/>
    <property type="chains" value="X=1-92"/>
</dbReference>
<dbReference type="PDB" id="8IDY">
    <property type="method" value="EM"/>
    <property type="resolution" value="3.00 A"/>
    <property type="chains" value="X=1-92"/>
</dbReference>
<dbReference type="PDB" id="8IE3">
    <property type="method" value="EM"/>
    <property type="resolution" value="3.30 A"/>
    <property type="chains" value="X=1-92"/>
</dbReference>
<dbReference type="PDB" id="8IFD">
    <property type="method" value="EM"/>
    <property type="resolution" value="2.59 A"/>
    <property type="chains" value="2j=1-92"/>
</dbReference>
<dbReference type="PDB" id="8IFE">
    <property type="method" value="EM"/>
    <property type="resolution" value="2.57 A"/>
    <property type="chains" value="2j=1-92"/>
</dbReference>
<dbReference type="PDB" id="8INE">
    <property type="method" value="EM"/>
    <property type="resolution" value="3.20 A"/>
    <property type="chains" value="X=1-92"/>
</dbReference>
<dbReference type="PDB" id="8INF">
    <property type="method" value="EM"/>
    <property type="resolution" value="3.00 A"/>
    <property type="chains" value="X=1-92"/>
</dbReference>
<dbReference type="PDB" id="8INK">
    <property type="method" value="EM"/>
    <property type="resolution" value="3.20 A"/>
    <property type="chains" value="X=1-92"/>
</dbReference>
<dbReference type="PDB" id="8IPD">
    <property type="method" value="EM"/>
    <property type="resolution" value="3.20 A"/>
    <property type="chains" value="X=1-92"/>
</dbReference>
<dbReference type="PDB" id="8IPX">
    <property type="method" value="EM"/>
    <property type="resolution" value="4.30 A"/>
    <property type="chains" value="X=1-92"/>
</dbReference>
<dbReference type="PDB" id="8IPY">
    <property type="method" value="EM"/>
    <property type="resolution" value="3.20 A"/>
    <property type="chains" value="X=1-92"/>
</dbReference>
<dbReference type="PDB" id="8IR1">
    <property type="method" value="EM"/>
    <property type="resolution" value="3.30 A"/>
    <property type="chains" value="X=1-92"/>
</dbReference>
<dbReference type="PDB" id="8IR3">
    <property type="method" value="EM"/>
    <property type="resolution" value="3.50 A"/>
    <property type="chains" value="X=1-92"/>
</dbReference>
<dbReference type="PDB" id="8JDJ">
    <property type="method" value="EM"/>
    <property type="resolution" value="2.50 A"/>
    <property type="chains" value="u=1-92"/>
</dbReference>
<dbReference type="PDB" id="8JDK">
    <property type="method" value="EM"/>
    <property type="resolution" value="2.26 A"/>
    <property type="chains" value="u=1-92"/>
</dbReference>
<dbReference type="PDB" id="8JDL">
    <property type="method" value="EM"/>
    <property type="resolution" value="2.42 A"/>
    <property type="chains" value="u=1-92"/>
</dbReference>
<dbReference type="PDB" id="8JDM">
    <property type="method" value="EM"/>
    <property type="resolution" value="2.67 A"/>
    <property type="chains" value="u=1-92"/>
</dbReference>
<dbReference type="PDB" id="8K2C">
    <property type="method" value="EM"/>
    <property type="resolution" value="2.40 A"/>
    <property type="chains" value="Lp=1-92"/>
</dbReference>
<dbReference type="PDB" id="8OHD">
    <property type="method" value="EM"/>
    <property type="resolution" value="3.10 A"/>
    <property type="chains" value="Lp=1-92"/>
</dbReference>
<dbReference type="PDB" id="8OJ0">
    <property type="method" value="EM"/>
    <property type="resolution" value="3.30 A"/>
    <property type="chains" value="Lp=1-92"/>
</dbReference>
<dbReference type="PDB" id="8OJ5">
    <property type="method" value="EM"/>
    <property type="resolution" value="2.90 A"/>
    <property type="chains" value="Lp=1-92"/>
</dbReference>
<dbReference type="PDB" id="8OJ8">
    <property type="method" value="EM"/>
    <property type="resolution" value="3.30 A"/>
    <property type="chains" value="Lp=1-92"/>
</dbReference>
<dbReference type="PDB" id="8QFD">
    <property type="method" value="EM"/>
    <property type="resolution" value="2.20 A"/>
    <property type="chains" value="p=1-92"/>
</dbReference>
<dbReference type="PDB" id="8QOI">
    <property type="method" value="EM"/>
    <property type="resolution" value="1.90 A"/>
    <property type="chains" value="Lp=1-92"/>
</dbReference>
<dbReference type="PDB" id="8QYX">
    <property type="method" value="EM"/>
    <property type="resolution" value="1.78 A"/>
    <property type="chains" value="j1=1-92"/>
</dbReference>
<dbReference type="PDB" id="8RL2">
    <property type="method" value="EM"/>
    <property type="resolution" value="2.84 A"/>
    <property type="chains" value="Lp=1-92"/>
</dbReference>
<dbReference type="PDB" id="8UKB">
    <property type="method" value="EM"/>
    <property type="resolution" value="3.05 A"/>
    <property type="chains" value="Lp=2-92"/>
</dbReference>
<dbReference type="PDB" id="8XSX">
    <property type="method" value="EM"/>
    <property type="resolution" value="2.40 A"/>
    <property type="chains" value="Lp=1-92"/>
</dbReference>
<dbReference type="PDB" id="8XSY">
    <property type="method" value="EM"/>
    <property type="resolution" value="3.00 A"/>
    <property type="chains" value="Lp=1-92"/>
</dbReference>
<dbReference type="PDB" id="8XSZ">
    <property type="method" value="EM"/>
    <property type="resolution" value="3.20 A"/>
    <property type="chains" value="Lp=1-92"/>
</dbReference>
<dbReference type="PDB" id="8Y0W">
    <property type="method" value="EM"/>
    <property type="resolution" value="3.40 A"/>
    <property type="chains" value="Lp=1-92"/>
</dbReference>
<dbReference type="PDB" id="8Y0X">
    <property type="method" value="EM"/>
    <property type="resolution" value="3.30 A"/>
    <property type="chains" value="Lp=1-92"/>
</dbReference>
<dbReference type="PDB" id="8YOO">
    <property type="method" value="EM"/>
    <property type="resolution" value="2.00 A"/>
    <property type="chains" value="Lp=1-92"/>
</dbReference>
<dbReference type="PDB" id="8YOP">
    <property type="method" value="EM"/>
    <property type="resolution" value="2.20 A"/>
    <property type="chains" value="Lp=1-92"/>
</dbReference>
<dbReference type="PDB" id="9C3H">
    <property type="method" value="EM"/>
    <property type="resolution" value="2.00 A"/>
    <property type="chains" value="Lp=1-92"/>
</dbReference>
<dbReference type="PDB" id="9G8M">
    <property type="method" value="EM"/>
    <property type="resolution" value="3.30 A"/>
    <property type="chains" value="Lp=1-92"/>
</dbReference>
<dbReference type="PDB" id="9GMO">
    <property type="method" value="EM"/>
    <property type="resolution" value="2.59 A"/>
    <property type="chains" value="j=1-92"/>
</dbReference>
<dbReference type="PDBsum" id="4UG0"/>
<dbReference type="PDBsum" id="4V6X"/>
<dbReference type="PDBsum" id="5AJ0"/>
<dbReference type="PDBsum" id="5LKS"/>
<dbReference type="PDBsum" id="5T2C"/>
<dbReference type="PDBsum" id="6IP5"/>
<dbReference type="PDBsum" id="6IP6"/>
<dbReference type="PDBsum" id="6IP8"/>
<dbReference type="PDBsum" id="6LQM"/>
<dbReference type="PDBsum" id="6LSR"/>
<dbReference type="PDBsum" id="6LSS"/>
<dbReference type="PDBsum" id="6LU8"/>
<dbReference type="PDBsum" id="6OLE"/>
<dbReference type="PDBsum" id="6OLF"/>
<dbReference type="PDBsum" id="6OLG"/>
<dbReference type="PDBsum" id="6OLI"/>
<dbReference type="PDBsum" id="6OLZ"/>
<dbReference type="PDBsum" id="6OM0"/>
<dbReference type="PDBsum" id="6OM7"/>
<dbReference type="PDBsum" id="6QZP"/>
<dbReference type="PDBsum" id="6W6L"/>
<dbReference type="PDBsum" id="6XA1"/>
<dbReference type="PDBsum" id="6Y0G"/>
<dbReference type="PDBsum" id="6Y2L"/>
<dbReference type="PDBsum" id="6Y57"/>
<dbReference type="PDBsum" id="6Y6X"/>
<dbReference type="PDBsum" id="6Z6L"/>
<dbReference type="PDBsum" id="6Z6M"/>
<dbReference type="PDBsum" id="6Z6N"/>
<dbReference type="PDBsum" id="6ZM7"/>
<dbReference type="PDBsum" id="6ZME"/>
<dbReference type="PDBsum" id="6ZMI"/>
<dbReference type="PDBsum" id="6ZMO"/>
<dbReference type="PDBsum" id="7BHP"/>
<dbReference type="PDBsum" id="7F5S"/>
<dbReference type="PDBsum" id="7OW7"/>
<dbReference type="PDBsum" id="7XNX"/>
<dbReference type="PDBsum" id="7XNY"/>
<dbReference type="PDBsum" id="8A3D"/>
<dbReference type="PDBsum" id="8FKZ"/>
<dbReference type="PDBsum" id="8FL2"/>
<dbReference type="PDBsum" id="8FL3"/>
<dbReference type="PDBsum" id="8FL4"/>
<dbReference type="PDBsum" id="8FL6"/>
<dbReference type="PDBsum" id="8FL7"/>
<dbReference type="PDBsum" id="8FL9"/>
<dbReference type="PDBsum" id="8FLA"/>
<dbReference type="PDBsum" id="8FLB"/>
<dbReference type="PDBsum" id="8FLC"/>
<dbReference type="PDBsum" id="8FLD"/>
<dbReference type="PDBsum" id="8FLE"/>
<dbReference type="PDBsum" id="8FLF"/>
<dbReference type="PDBsum" id="8G5Y"/>
<dbReference type="PDBsum" id="8G5Z"/>
<dbReference type="PDBsum" id="8G60"/>
<dbReference type="PDBsum" id="8G61"/>
<dbReference type="PDBsum" id="8G6J"/>
<dbReference type="PDBsum" id="8GLP"/>
<dbReference type="PDBsum" id="8IDT"/>
<dbReference type="PDBsum" id="8IDY"/>
<dbReference type="PDBsum" id="8IE3"/>
<dbReference type="PDBsum" id="8IFD"/>
<dbReference type="PDBsum" id="8IFE"/>
<dbReference type="PDBsum" id="8INE"/>
<dbReference type="PDBsum" id="8INF"/>
<dbReference type="PDBsum" id="8INK"/>
<dbReference type="PDBsum" id="8IPD"/>
<dbReference type="PDBsum" id="8IPX"/>
<dbReference type="PDBsum" id="8IPY"/>
<dbReference type="PDBsum" id="8IR1"/>
<dbReference type="PDBsum" id="8IR3"/>
<dbReference type="PDBsum" id="8JDJ"/>
<dbReference type="PDBsum" id="8JDK"/>
<dbReference type="PDBsum" id="8JDL"/>
<dbReference type="PDBsum" id="8JDM"/>
<dbReference type="PDBsum" id="8K2C"/>
<dbReference type="PDBsum" id="8OHD"/>
<dbReference type="PDBsum" id="8OJ0"/>
<dbReference type="PDBsum" id="8OJ5"/>
<dbReference type="PDBsum" id="8OJ8"/>
<dbReference type="PDBsum" id="8QFD"/>
<dbReference type="PDBsum" id="8QOI"/>
<dbReference type="PDBsum" id="8QYX"/>
<dbReference type="PDBsum" id="8RL2"/>
<dbReference type="PDBsum" id="8UKB"/>
<dbReference type="PDBsum" id="8XSX"/>
<dbReference type="PDBsum" id="8XSY"/>
<dbReference type="PDBsum" id="8XSZ"/>
<dbReference type="PDBsum" id="8Y0W"/>
<dbReference type="PDBsum" id="8Y0X"/>
<dbReference type="PDBsum" id="8YOO"/>
<dbReference type="PDBsum" id="8YOP"/>
<dbReference type="PDBsum" id="9C3H"/>
<dbReference type="PDBsum" id="9G8M"/>
<dbReference type="PDBsum" id="9GMO"/>
<dbReference type="EMDB" id="EMD-0948"/>
<dbReference type="EMDB" id="EMD-0963"/>
<dbReference type="EMDB" id="EMD-0964"/>
<dbReference type="EMDB" id="EMD-0978"/>
<dbReference type="EMDB" id="EMD-10668"/>
<dbReference type="EMDB" id="EMD-10674"/>
<dbReference type="EMDB" id="EMD-10690"/>
<dbReference type="EMDB" id="EMD-10709"/>
<dbReference type="EMDB" id="EMD-11098"/>
<dbReference type="EMDB" id="EMD-11099"/>
<dbReference type="EMDB" id="EMD-11100"/>
<dbReference type="EMDB" id="EMD-11288"/>
<dbReference type="EMDB" id="EMD-11289"/>
<dbReference type="EMDB" id="EMD-11292"/>
<dbReference type="EMDB" id="EMD-11299"/>
<dbReference type="EMDB" id="EMD-12189"/>
<dbReference type="EMDB" id="EMD-13094"/>
<dbReference type="EMDB" id="EMD-15113"/>
<dbReference type="EMDB" id="EMD-16880"/>
<dbReference type="EMDB" id="EMD-16902"/>
<dbReference type="EMDB" id="EMD-16905"/>
<dbReference type="EMDB" id="EMD-16908"/>
<dbReference type="EMDB" id="EMD-18382"/>
<dbReference type="EMDB" id="EMD-18539"/>
<dbReference type="EMDB" id="EMD-18765"/>
<dbReference type="EMDB" id="EMD-19330"/>
<dbReference type="EMDB" id="EMD-29262"/>
<dbReference type="EMDB" id="EMD-29265"/>
<dbReference type="EMDB" id="EMD-29266"/>
<dbReference type="EMDB" id="EMD-29267"/>
<dbReference type="EMDB" id="EMD-29268"/>
<dbReference type="EMDB" id="EMD-29269"/>
<dbReference type="EMDB" id="EMD-29271"/>
<dbReference type="EMDB" id="EMD-29272"/>
<dbReference type="EMDB" id="EMD-29273"/>
<dbReference type="EMDB" id="EMD-29274"/>
<dbReference type="EMDB" id="EMD-29275"/>
<dbReference type="EMDB" id="EMD-29276"/>
<dbReference type="EMDB" id="EMD-29277"/>
<dbReference type="EMDB" id="EMD-29757"/>
<dbReference type="EMDB" id="EMD-29758"/>
<dbReference type="EMDB" id="EMD-29759"/>
<dbReference type="EMDB" id="EMD-29760"/>
<dbReference type="EMDB" id="EMD-29771"/>
<dbReference type="EMDB" id="EMD-31465"/>
<dbReference type="EMDB" id="EMD-33329"/>
<dbReference type="EMDB" id="EMD-33330"/>
<dbReference type="EMDB" id="EMD-35370"/>
<dbReference type="EMDB" id="EMD-35371"/>
<dbReference type="EMDB" id="EMD-35375"/>
<dbReference type="EMDB" id="EMD-35413"/>
<dbReference type="EMDB" id="EMD-35414"/>
<dbReference type="EMDB" id="EMD-35596"/>
<dbReference type="EMDB" id="EMD-35597"/>
<dbReference type="EMDB" id="EMD-35599"/>
<dbReference type="EMDB" id="EMD-35639"/>
<dbReference type="EMDB" id="EMD-35649"/>
<dbReference type="EMDB" id="EMD-35651"/>
<dbReference type="EMDB" id="EMD-35672"/>
<dbReference type="EMDB" id="EMD-35673"/>
<dbReference type="EMDB" id="EMD-36178"/>
<dbReference type="EMDB" id="EMD-36179"/>
<dbReference type="EMDB" id="EMD-36180"/>
<dbReference type="EMDB" id="EMD-36181"/>
<dbReference type="EMDB" id="EMD-36838"/>
<dbReference type="EMDB" id="EMD-38629"/>
<dbReference type="EMDB" id="EMD-38630"/>
<dbReference type="EMDB" id="EMD-38631"/>
<dbReference type="EMDB" id="EMD-3883"/>
<dbReference type="EMDB" id="EMD-39455"/>
<dbReference type="EMDB" id="EMD-39456"/>
<dbReference type="EMDB" id="EMD-40205"/>
<dbReference type="EMDB" id="EMD-4070"/>
<dbReference type="EMDB" id="EMD-42351"/>
<dbReference type="EMDB" id="EMD-45170"/>
<dbReference type="EMDB" id="EMD-51132"/>
<dbReference type="EMDB" id="EMD-51452"/>
<dbReference type="EMDB" id="EMD-9701"/>
<dbReference type="EMDB" id="EMD-9702"/>
<dbReference type="EMDB" id="EMD-9703"/>
<dbReference type="SMR" id="P61513"/>
<dbReference type="BioGRID" id="112087">
    <property type="interactions" value="414"/>
</dbReference>
<dbReference type="ComplexPortal" id="CPX-5183">
    <property type="entry name" value="60S cytosolic large ribosomal subunit"/>
</dbReference>
<dbReference type="ComplexPortal" id="CPX-7664">
    <property type="entry name" value="60S cytosolic large ribosomal subunit, testis-specific variant"/>
</dbReference>
<dbReference type="ComplexPortal" id="CPX-7665">
    <property type="entry name" value="60S cytosolic large ribosomal subunit, striated muscle variant"/>
</dbReference>
<dbReference type="CORUM" id="P61513"/>
<dbReference type="FunCoup" id="P61513">
    <property type="interactions" value="1773"/>
</dbReference>
<dbReference type="IntAct" id="P61513">
    <property type="interactions" value="229"/>
</dbReference>
<dbReference type="MINT" id="P61513"/>
<dbReference type="STRING" id="9606.ENSP00000418082"/>
<dbReference type="GlyGen" id="P61513">
    <property type="glycosylation" value="2 sites, 2 N-linked glycans (1 site), 1 O-linked glycan (1 site)"/>
</dbReference>
<dbReference type="iPTMnet" id="P61513"/>
<dbReference type="MetOSite" id="P61513"/>
<dbReference type="PhosphoSitePlus" id="P61513"/>
<dbReference type="SwissPalm" id="P61513"/>
<dbReference type="BioMuta" id="RPL37A"/>
<dbReference type="DMDM" id="47606455"/>
<dbReference type="jPOST" id="P61513"/>
<dbReference type="MassIVE" id="P61513"/>
<dbReference type="PaxDb" id="9606-ENSP00000418082"/>
<dbReference type="PeptideAtlas" id="P61513"/>
<dbReference type="ProteomicsDB" id="57302"/>
<dbReference type="Pumba" id="P61513"/>
<dbReference type="TopDownProteomics" id="P61513"/>
<dbReference type="Antibodypedia" id="35073">
    <property type="antibodies" value="96 antibodies from 24 providers"/>
</dbReference>
<dbReference type="DNASU" id="6168"/>
<dbReference type="Ensembl" id="ENST00000491306.6">
    <property type="protein sequence ID" value="ENSP00000418082.1"/>
    <property type="gene ID" value="ENSG00000197756.10"/>
</dbReference>
<dbReference type="GeneID" id="6168"/>
<dbReference type="KEGG" id="hsa:6168"/>
<dbReference type="MANE-Select" id="ENST00000491306.6">
    <property type="protein sequence ID" value="ENSP00000418082.1"/>
    <property type="RefSeq nucleotide sequence ID" value="NM_000998.5"/>
    <property type="RefSeq protein sequence ID" value="NP_000989.1"/>
</dbReference>
<dbReference type="UCSC" id="uc002vgf.4">
    <property type="organism name" value="human"/>
</dbReference>
<dbReference type="AGR" id="HGNC:10348"/>
<dbReference type="CTD" id="6168"/>
<dbReference type="DisGeNET" id="6168"/>
<dbReference type="GeneCards" id="RPL37A"/>
<dbReference type="HGNC" id="HGNC:10348">
    <property type="gene designation" value="RPL37A"/>
</dbReference>
<dbReference type="HPA" id="ENSG00000197756">
    <property type="expression patterns" value="Low tissue specificity"/>
</dbReference>
<dbReference type="MIM" id="613314">
    <property type="type" value="gene"/>
</dbReference>
<dbReference type="neXtProt" id="NX_P61513"/>
<dbReference type="OpenTargets" id="ENSG00000197756"/>
<dbReference type="PharmGKB" id="PA34737"/>
<dbReference type="VEuPathDB" id="HostDB:ENSG00000197756"/>
<dbReference type="eggNOG" id="KOG0402">
    <property type="taxonomic scope" value="Eukaryota"/>
</dbReference>
<dbReference type="GeneTree" id="ENSGT00390000016988"/>
<dbReference type="HOGENOM" id="CLU_141199_1_0_1"/>
<dbReference type="InParanoid" id="P61513"/>
<dbReference type="OMA" id="GPRYGRK"/>
<dbReference type="OrthoDB" id="10258345at2759"/>
<dbReference type="PAN-GO" id="P61513">
    <property type="GO annotations" value="1 GO annotation based on evolutionary models"/>
</dbReference>
<dbReference type="PhylomeDB" id="P61513"/>
<dbReference type="TreeFam" id="TF313068"/>
<dbReference type="PathwayCommons" id="P61513"/>
<dbReference type="Reactome" id="R-HSA-156827">
    <property type="pathway name" value="L13a-mediated translational silencing of Ceruloplasmin expression"/>
</dbReference>
<dbReference type="Reactome" id="R-HSA-156902">
    <property type="pathway name" value="Peptide chain elongation"/>
</dbReference>
<dbReference type="Reactome" id="R-HSA-1799339">
    <property type="pathway name" value="SRP-dependent cotranslational protein targeting to membrane"/>
</dbReference>
<dbReference type="Reactome" id="R-HSA-192823">
    <property type="pathway name" value="Viral mRNA Translation"/>
</dbReference>
<dbReference type="Reactome" id="R-HSA-2408557">
    <property type="pathway name" value="Selenocysteine synthesis"/>
</dbReference>
<dbReference type="Reactome" id="R-HSA-6791226">
    <property type="pathway name" value="Major pathway of rRNA processing in the nucleolus and cytosol"/>
</dbReference>
<dbReference type="Reactome" id="R-HSA-72689">
    <property type="pathway name" value="Formation of a pool of free 40S subunits"/>
</dbReference>
<dbReference type="Reactome" id="R-HSA-72706">
    <property type="pathway name" value="GTP hydrolysis and joining of the 60S ribosomal subunit"/>
</dbReference>
<dbReference type="Reactome" id="R-HSA-72764">
    <property type="pathway name" value="Eukaryotic Translation Termination"/>
</dbReference>
<dbReference type="Reactome" id="R-HSA-9010553">
    <property type="pathway name" value="Regulation of expression of SLITs and ROBOs"/>
</dbReference>
<dbReference type="Reactome" id="R-HSA-9633012">
    <property type="pathway name" value="Response of EIF2AK4 (GCN2) to amino acid deficiency"/>
</dbReference>
<dbReference type="Reactome" id="R-HSA-975956">
    <property type="pathway name" value="Nonsense Mediated Decay (NMD) independent of the Exon Junction Complex (EJC)"/>
</dbReference>
<dbReference type="Reactome" id="R-HSA-975957">
    <property type="pathway name" value="Nonsense Mediated Decay (NMD) enhanced by the Exon Junction Complex (EJC)"/>
</dbReference>
<dbReference type="SignaLink" id="P61513"/>
<dbReference type="SIGNOR" id="P61513"/>
<dbReference type="BioGRID-ORCS" id="6168">
    <property type="hits" value="839 hits in 1138 CRISPR screens"/>
</dbReference>
<dbReference type="CD-CODE" id="91857CE7">
    <property type="entry name" value="Nucleolus"/>
</dbReference>
<dbReference type="ChiTaRS" id="RPL37A">
    <property type="organism name" value="human"/>
</dbReference>
<dbReference type="GeneWiki" id="RPL37A"/>
<dbReference type="GenomeRNAi" id="6168"/>
<dbReference type="Pharos" id="P61513">
    <property type="development level" value="Tbio"/>
</dbReference>
<dbReference type="PRO" id="PR:P61513"/>
<dbReference type="Proteomes" id="UP000005640">
    <property type="component" value="Chromosome 2"/>
</dbReference>
<dbReference type="RNAct" id="P61513">
    <property type="molecule type" value="protein"/>
</dbReference>
<dbReference type="Bgee" id="ENSG00000197756">
    <property type="expression patterns" value="Expressed in upper leg skin and 209 other cell types or tissues"/>
</dbReference>
<dbReference type="ExpressionAtlas" id="P61513">
    <property type="expression patterns" value="baseline and differential"/>
</dbReference>
<dbReference type="GO" id="GO:0005737">
    <property type="term" value="C:cytoplasm"/>
    <property type="evidence" value="ECO:0000303"/>
    <property type="project" value="ComplexPortal"/>
</dbReference>
<dbReference type="GO" id="GO:0005829">
    <property type="term" value="C:cytosol"/>
    <property type="evidence" value="ECO:0000304"/>
    <property type="project" value="Reactome"/>
</dbReference>
<dbReference type="GO" id="GO:0022625">
    <property type="term" value="C:cytosolic large ribosomal subunit"/>
    <property type="evidence" value="ECO:0000314"/>
    <property type="project" value="UniProtKB"/>
</dbReference>
<dbReference type="GO" id="GO:0022626">
    <property type="term" value="C:cytosolic ribosome"/>
    <property type="evidence" value="ECO:0000314"/>
    <property type="project" value="FlyBase"/>
</dbReference>
<dbReference type="GO" id="GO:0070062">
    <property type="term" value="C:extracellular exosome"/>
    <property type="evidence" value="ECO:0007005"/>
    <property type="project" value="UniProtKB"/>
</dbReference>
<dbReference type="GO" id="GO:0005925">
    <property type="term" value="C:focal adhesion"/>
    <property type="evidence" value="ECO:0007005"/>
    <property type="project" value="UniProtKB"/>
</dbReference>
<dbReference type="GO" id="GO:0005634">
    <property type="term" value="C:nucleus"/>
    <property type="evidence" value="ECO:0007005"/>
    <property type="project" value="UniProtKB"/>
</dbReference>
<dbReference type="GO" id="GO:0045202">
    <property type="term" value="C:synapse"/>
    <property type="evidence" value="ECO:0007669"/>
    <property type="project" value="Ensembl"/>
</dbReference>
<dbReference type="GO" id="GO:0003723">
    <property type="term" value="F:RNA binding"/>
    <property type="evidence" value="ECO:0007005"/>
    <property type="project" value="UniProtKB"/>
</dbReference>
<dbReference type="GO" id="GO:0003735">
    <property type="term" value="F:structural constituent of ribosome"/>
    <property type="evidence" value="ECO:0000314"/>
    <property type="project" value="UniProtKB"/>
</dbReference>
<dbReference type="GO" id="GO:0008270">
    <property type="term" value="F:zinc ion binding"/>
    <property type="evidence" value="ECO:0007669"/>
    <property type="project" value="UniProtKB-KW"/>
</dbReference>
<dbReference type="GO" id="GO:0002181">
    <property type="term" value="P:cytoplasmic translation"/>
    <property type="evidence" value="ECO:0000303"/>
    <property type="project" value="ComplexPortal"/>
</dbReference>
<dbReference type="GO" id="GO:0006412">
    <property type="term" value="P:translation"/>
    <property type="evidence" value="ECO:0000303"/>
    <property type="project" value="UniProtKB"/>
</dbReference>
<dbReference type="FunFam" id="2.20.25.30:FF:000002">
    <property type="entry name" value="60S ribosomal protein L37a"/>
    <property type="match status" value="1"/>
</dbReference>
<dbReference type="Gene3D" id="2.20.25.30">
    <property type="match status" value="1"/>
</dbReference>
<dbReference type="HAMAP" id="MF_00327">
    <property type="entry name" value="Ribosomal_eL43"/>
    <property type="match status" value="1"/>
</dbReference>
<dbReference type="InterPro" id="IPR011331">
    <property type="entry name" value="Ribosomal_eL37/eL43"/>
</dbReference>
<dbReference type="InterPro" id="IPR002674">
    <property type="entry name" value="Ribosomal_eL43"/>
</dbReference>
<dbReference type="InterPro" id="IPR011332">
    <property type="entry name" value="Ribosomal_zn-bd"/>
</dbReference>
<dbReference type="NCBIfam" id="TIGR00280">
    <property type="entry name" value="eL43_euk_arch"/>
    <property type="match status" value="1"/>
</dbReference>
<dbReference type="NCBIfam" id="NF003058">
    <property type="entry name" value="PRK03976.1"/>
    <property type="match status" value="1"/>
</dbReference>
<dbReference type="PANTHER" id="PTHR48188:SF2">
    <property type="entry name" value="60S RIBOSOMAL PROTEIN L37A"/>
    <property type="match status" value="1"/>
</dbReference>
<dbReference type="PANTHER" id="PTHR48188">
    <property type="entry name" value="60S RIBOSOMAL PROTEIN L43"/>
    <property type="match status" value="1"/>
</dbReference>
<dbReference type="Pfam" id="PF01780">
    <property type="entry name" value="Ribosomal_L37ae"/>
    <property type="match status" value="1"/>
</dbReference>
<dbReference type="SUPFAM" id="SSF57829">
    <property type="entry name" value="Zn-binding ribosomal proteins"/>
    <property type="match status" value="1"/>
</dbReference>